<name>SDP1L_ARATH</name>
<dbReference type="EC" id="3.1.1.3" evidence="6"/>
<dbReference type="EMBL" id="AL138655">
    <property type="protein sequence ID" value="CAB72184.1"/>
    <property type="molecule type" value="Genomic_DNA"/>
</dbReference>
<dbReference type="EMBL" id="CP002686">
    <property type="protein sequence ID" value="AEE79619.1"/>
    <property type="molecule type" value="Genomic_DNA"/>
</dbReference>
<dbReference type="EMBL" id="CP002686">
    <property type="protein sequence ID" value="AEE79620.1"/>
    <property type="molecule type" value="Genomic_DNA"/>
</dbReference>
<dbReference type="EMBL" id="AK117921">
    <property type="protein sequence ID" value="BAC42559.1"/>
    <property type="molecule type" value="mRNA"/>
</dbReference>
<dbReference type="EMBL" id="BT005969">
    <property type="protein sequence ID" value="AAO64904.1"/>
    <property type="molecule type" value="mRNA"/>
</dbReference>
<dbReference type="PIR" id="T47774">
    <property type="entry name" value="T47774"/>
</dbReference>
<dbReference type="FunCoup" id="Q9M1I6">
    <property type="interactions" value="540"/>
</dbReference>
<dbReference type="STRING" id="3702.Q9M1I6"/>
<dbReference type="GlyCosmos" id="Q9M1I6">
    <property type="glycosylation" value="9 sites, No reported glycans"/>
</dbReference>
<dbReference type="GlyGen" id="Q9M1I6">
    <property type="glycosylation" value="9 sites"/>
</dbReference>
<dbReference type="iPTMnet" id="Q9M1I6"/>
<dbReference type="PaxDb" id="3702-AT3G57140.2"/>
<dbReference type="ProteomicsDB" id="234516"/>
<dbReference type="EnsemblPlants" id="AT3G57140.1">
    <property type="protein sequence ID" value="AT3G57140.1"/>
    <property type="gene ID" value="AT3G57140"/>
</dbReference>
<dbReference type="EnsemblPlants" id="AT3G57140.2">
    <property type="protein sequence ID" value="AT3G57140.2"/>
    <property type="gene ID" value="AT3G57140"/>
</dbReference>
<dbReference type="Gramene" id="AT3G57140.1">
    <property type="protein sequence ID" value="AT3G57140.1"/>
    <property type="gene ID" value="AT3G57140"/>
</dbReference>
<dbReference type="Gramene" id="AT3G57140.2">
    <property type="protein sequence ID" value="AT3G57140.2"/>
    <property type="gene ID" value="AT3G57140"/>
</dbReference>
<dbReference type="KEGG" id="ath:AT3G57140"/>
<dbReference type="Araport" id="AT3G57140"/>
<dbReference type="TAIR" id="AT3G57140">
    <property type="gene designation" value="SDP1-LIKE"/>
</dbReference>
<dbReference type="eggNOG" id="KOG2214">
    <property type="taxonomic scope" value="Eukaryota"/>
</dbReference>
<dbReference type="HOGENOM" id="CLU_013822_0_0_1"/>
<dbReference type="InParanoid" id="Q9M1I6"/>
<dbReference type="OMA" id="AQMFTDY"/>
<dbReference type="OrthoDB" id="15478at2759"/>
<dbReference type="PhylomeDB" id="Q9M1I6"/>
<dbReference type="BioCyc" id="ARA:AT3G57140-MONOMER"/>
<dbReference type="PRO" id="PR:Q9M1I6"/>
<dbReference type="Proteomes" id="UP000006548">
    <property type="component" value="Chromosome 3"/>
</dbReference>
<dbReference type="ExpressionAtlas" id="Q9M1I6">
    <property type="expression patterns" value="baseline and differential"/>
</dbReference>
<dbReference type="GO" id="GO:0005811">
    <property type="term" value="C:lipid droplet"/>
    <property type="evidence" value="ECO:0007669"/>
    <property type="project" value="UniProtKB-SubCell"/>
</dbReference>
<dbReference type="GO" id="GO:0016020">
    <property type="term" value="C:membrane"/>
    <property type="evidence" value="ECO:0007669"/>
    <property type="project" value="UniProtKB-SubCell"/>
</dbReference>
<dbReference type="GO" id="GO:0004806">
    <property type="term" value="F:triacylglycerol lipase activity"/>
    <property type="evidence" value="ECO:0000314"/>
    <property type="project" value="UniProtKB"/>
</dbReference>
<dbReference type="GO" id="GO:0016042">
    <property type="term" value="P:lipid catabolic process"/>
    <property type="evidence" value="ECO:0000314"/>
    <property type="project" value="UniProtKB"/>
</dbReference>
<dbReference type="CDD" id="cd07231">
    <property type="entry name" value="Pat_SDP1-like"/>
    <property type="match status" value="1"/>
</dbReference>
<dbReference type="Gene3D" id="3.40.1090.10">
    <property type="entry name" value="Cytosolic phospholipase A2 catalytic domain"/>
    <property type="match status" value="2"/>
</dbReference>
<dbReference type="InterPro" id="IPR016035">
    <property type="entry name" value="Acyl_Trfase/lysoPLipase"/>
</dbReference>
<dbReference type="InterPro" id="IPR050301">
    <property type="entry name" value="NTE"/>
</dbReference>
<dbReference type="InterPro" id="IPR002641">
    <property type="entry name" value="PNPLA_dom"/>
</dbReference>
<dbReference type="InterPro" id="IPR021771">
    <property type="entry name" value="Triacylglycerol_lipase_N"/>
</dbReference>
<dbReference type="PANTHER" id="PTHR14226">
    <property type="entry name" value="NEUROPATHY TARGET ESTERASE/SWISS CHEESE D.MELANOGASTER"/>
    <property type="match status" value="1"/>
</dbReference>
<dbReference type="PANTHER" id="PTHR14226:SF75">
    <property type="entry name" value="TRIACYLGLYCEROL LIPASE SDP1L"/>
    <property type="match status" value="1"/>
</dbReference>
<dbReference type="Pfam" id="PF11815">
    <property type="entry name" value="DUF3336"/>
    <property type="match status" value="1"/>
</dbReference>
<dbReference type="Pfam" id="PF01734">
    <property type="entry name" value="Patatin"/>
    <property type="match status" value="1"/>
</dbReference>
<dbReference type="SUPFAM" id="SSF52151">
    <property type="entry name" value="FabD/lysophospholipase-like"/>
    <property type="match status" value="1"/>
</dbReference>
<dbReference type="PROSITE" id="PS51635">
    <property type="entry name" value="PNPLA"/>
    <property type="match status" value="1"/>
</dbReference>
<accession>Q9M1I6</accession>
<feature type="chain" id="PRO_0000433128" description="Triacylglycerol lipase SDP1L">
    <location>
        <begin position="1"/>
        <end position="801"/>
    </location>
</feature>
<feature type="transmembrane region" description="Helical" evidence="2">
    <location>
        <begin position="232"/>
        <end position="249"/>
    </location>
</feature>
<feature type="transmembrane region" description="Helical" evidence="2">
    <location>
        <begin position="261"/>
        <end position="277"/>
    </location>
</feature>
<feature type="domain" description="PNPLA" evidence="4">
    <location>
        <begin position="233"/>
        <end position="436"/>
    </location>
</feature>
<feature type="region of interest" description="Disordered" evidence="5">
    <location>
        <begin position="648"/>
        <end position="675"/>
    </location>
</feature>
<feature type="region of interest" description="Disordered" evidence="5">
    <location>
        <begin position="750"/>
        <end position="801"/>
    </location>
</feature>
<feature type="short sequence motif" description="GXSXG" evidence="4">
    <location>
        <begin position="264"/>
        <end position="268"/>
    </location>
</feature>
<feature type="compositionally biased region" description="Acidic residues" evidence="5">
    <location>
        <begin position="753"/>
        <end position="765"/>
    </location>
</feature>
<feature type="active site" description="Nucleophile" evidence="4">
    <location>
        <position position="266"/>
    </location>
</feature>
<feature type="active site" description="Proton acceptor" evidence="4">
    <location>
        <position position="423"/>
    </location>
</feature>
<feature type="glycosylation site" description="N-linked (GlcNAc...) asparagine" evidence="3">
    <location>
        <position position="130"/>
    </location>
</feature>
<feature type="glycosylation site" description="N-linked (GlcNAc...) asparagine" evidence="3">
    <location>
        <position position="328"/>
    </location>
</feature>
<feature type="glycosylation site" description="N-linked (GlcNAc...) asparagine" evidence="3">
    <location>
        <position position="332"/>
    </location>
</feature>
<feature type="glycosylation site" description="N-linked (GlcNAc...) asparagine" evidence="3">
    <location>
        <position position="605"/>
    </location>
</feature>
<feature type="glycosylation site" description="N-linked (GlcNAc...) asparagine" evidence="3">
    <location>
        <position position="620"/>
    </location>
</feature>
<feature type="glycosylation site" description="N-linked (GlcNAc...) asparagine" evidence="3">
    <location>
        <position position="649"/>
    </location>
</feature>
<feature type="glycosylation site" description="N-linked (GlcNAc...) asparagine" evidence="3">
    <location>
        <position position="653"/>
    </location>
</feature>
<feature type="glycosylation site" description="N-linked (GlcNAc...) asparagine" evidence="3">
    <location>
        <position position="708"/>
    </location>
</feature>
<feature type="glycosylation site" description="N-linked (GlcNAc...) asparagine" evidence="3">
    <location>
        <position position="759"/>
    </location>
</feature>
<reference key="1">
    <citation type="journal article" date="2000" name="Nature">
        <title>Sequence and analysis of chromosome 3 of the plant Arabidopsis thaliana.</title>
        <authorList>
            <person name="Salanoubat M."/>
            <person name="Lemcke K."/>
            <person name="Rieger M."/>
            <person name="Ansorge W."/>
            <person name="Unseld M."/>
            <person name="Fartmann B."/>
            <person name="Valle G."/>
            <person name="Bloecker H."/>
            <person name="Perez-Alonso M."/>
            <person name="Obermaier B."/>
            <person name="Delseny M."/>
            <person name="Boutry M."/>
            <person name="Grivell L.A."/>
            <person name="Mache R."/>
            <person name="Puigdomenech P."/>
            <person name="De Simone V."/>
            <person name="Choisne N."/>
            <person name="Artiguenave F."/>
            <person name="Robert C."/>
            <person name="Brottier P."/>
            <person name="Wincker P."/>
            <person name="Cattolico L."/>
            <person name="Weissenbach J."/>
            <person name="Saurin W."/>
            <person name="Quetier F."/>
            <person name="Schaefer M."/>
            <person name="Mueller-Auer S."/>
            <person name="Gabel C."/>
            <person name="Fuchs M."/>
            <person name="Benes V."/>
            <person name="Wurmbach E."/>
            <person name="Drzonek H."/>
            <person name="Erfle H."/>
            <person name="Jordan N."/>
            <person name="Bangert S."/>
            <person name="Wiedelmann R."/>
            <person name="Kranz H."/>
            <person name="Voss H."/>
            <person name="Holland R."/>
            <person name="Brandt P."/>
            <person name="Nyakatura G."/>
            <person name="Vezzi A."/>
            <person name="D'Angelo M."/>
            <person name="Pallavicini A."/>
            <person name="Toppo S."/>
            <person name="Simionati B."/>
            <person name="Conrad A."/>
            <person name="Hornischer K."/>
            <person name="Kauer G."/>
            <person name="Loehnert T.-H."/>
            <person name="Nordsiek G."/>
            <person name="Reichelt J."/>
            <person name="Scharfe M."/>
            <person name="Schoen O."/>
            <person name="Bargues M."/>
            <person name="Terol J."/>
            <person name="Climent J."/>
            <person name="Navarro P."/>
            <person name="Collado C."/>
            <person name="Perez-Perez A."/>
            <person name="Ottenwaelder B."/>
            <person name="Duchemin D."/>
            <person name="Cooke R."/>
            <person name="Laudie M."/>
            <person name="Berger-Llauro C."/>
            <person name="Purnelle B."/>
            <person name="Masuy D."/>
            <person name="de Haan M."/>
            <person name="Maarse A.C."/>
            <person name="Alcaraz J.-P."/>
            <person name="Cottet A."/>
            <person name="Casacuberta E."/>
            <person name="Monfort A."/>
            <person name="Argiriou A."/>
            <person name="Flores M."/>
            <person name="Liguori R."/>
            <person name="Vitale D."/>
            <person name="Mannhaupt G."/>
            <person name="Haase D."/>
            <person name="Schoof H."/>
            <person name="Rudd S."/>
            <person name="Zaccaria P."/>
            <person name="Mewes H.-W."/>
            <person name="Mayer K.F.X."/>
            <person name="Kaul S."/>
            <person name="Town C.D."/>
            <person name="Koo H.L."/>
            <person name="Tallon L.J."/>
            <person name="Jenkins J."/>
            <person name="Rooney T."/>
            <person name="Rizzo M."/>
            <person name="Walts A."/>
            <person name="Utterback T."/>
            <person name="Fujii C.Y."/>
            <person name="Shea T.P."/>
            <person name="Creasy T.H."/>
            <person name="Haas B."/>
            <person name="Maiti R."/>
            <person name="Wu D."/>
            <person name="Peterson J."/>
            <person name="Van Aken S."/>
            <person name="Pai G."/>
            <person name="Militscher J."/>
            <person name="Sellers P."/>
            <person name="Gill J.E."/>
            <person name="Feldblyum T.V."/>
            <person name="Preuss D."/>
            <person name="Lin X."/>
            <person name="Nierman W.C."/>
            <person name="Salzberg S.L."/>
            <person name="White O."/>
            <person name="Venter J.C."/>
            <person name="Fraser C.M."/>
            <person name="Kaneko T."/>
            <person name="Nakamura Y."/>
            <person name="Sato S."/>
            <person name="Kato T."/>
            <person name="Asamizu E."/>
            <person name="Sasamoto S."/>
            <person name="Kimura T."/>
            <person name="Idesawa K."/>
            <person name="Kawashima K."/>
            <person name="Kishida Y."/>
            <person name="Kiyokawa C."/>
            <person name="Kohara M."/>
            <person name="Matsumoto M."/>
            <person name="Matsuno A."/>
            <person name="Muraki A."/>
            <person name="Nakayama S."/>
            <person name="Nakazaki N."/>
            <person name="Shinpo S."/>
            <person name="Takeuchi C."/>
            <person name="Wada T."/>
            <person name="Watanabe A."/>
            <person name="Yamada M."/>
            <person name="Yasuda M."/>
            <person name="Tabata S."/>
        </authorList>
    </citation>
    <scope>NUCLEOTIDE SEQUENCE [LARGE SCALE GENOMIC DNA]</scope>
    <source>
        <strain>cv. Columbia</strain>
    </source>
</reference>
<reference key="2">
    <citation type="journal article" date="2017" name="Plant J.">
        <title>Araport11: a complete reannotation of the Arabidopsis thaliana reference genome.</title>
        <authorList>
            <person name="Cheng C.Y."/>
            <person name="Krishnakumar V."/>
            <person name="Chan A.P."/>
            <person name="Thibaud-Nissen F."/>
            <person name="Schobel S."/>
            <person name="Town C.D."/>
        </authorList>
    </citation>
    <scope>GENOME REANNOTATION</scope>
    <source>
        <strain>cv. Columbia</strain>
    </source>
</reference>
<reference key="3">
    <citation type="journal article" date="2002" name="Science">
        <title>Functional annotation of a full-length Arabidopsis cDNA collection.</title>
        <authorList>
            <person name="Seki M."/>
            <person name="Narusaka M."/>
            <person name="Kamiya A."/>
            <person name="Ishida J."/>
            <person name="Satou M."/>
            <person name="Sakurai T."/>
            <person name="Nakajima M."/>
            <person name="Enju A."/>
            <person name="Akiyama K."/>
            <person name="Oono Y."/>
            <person name="Muramatsu M."/>
            <person name="Hayashizaki Y."/>
            <person name="Kawai J."/>
            <person name="Carninci P."/>
            <person name="Itoh M."/>
            <person name="Ishii Y."/>
            <person name="Arakawa T."/>
            <person name="Shibata K."/>
            <person name="Shinagawa A."/>
            <person name="Shinozaki K."/>
        </authorList>
    </citation>
    <scope>NUCLEOTIDE SEQUENCE [LARGE SCALE MRNA]</scope>
    <source>
        <strain>cv. Columbia</strain>
    </source>
</reference>
<reference key="4">
    <citation type="journal article" date="2003" name="Science">
        <title>Empirical analysis of transcriptional activity in the Arabidopsis genome.</title>
        <authorList>
            <person name="Yamada K."/>
            <person name="Lim J."/>
            <person name="Dale J.M."/>
            <person name="Chen H."/>
            <person name="Shinn P."/>
            <person name="Palm C.J."/>
            <person name="Southwick A.M."/>
            <person name="Wu H.C."/>
            <person name="Kim C.J."/>
            <person name="Nguyen M."/>
            <person name="Pham P.K."/>
            <person name="Cheuk R.F."/>
            <person name="Karlin-Newmann G."/>
            <person name="Liu S.X."/>
            <person name="Lam B."/>
            <person name="Sakano H."/>
            <person name="Wu T."/>
            <person name="Yu G."/>
            <person name="Miranda M."/>
            <person name="Quach H.L."/>
            <person name="Tripp M."/>
            <person name="Chang C.H."/>
            <person name="Lee J.M."/>
            <person name="Toriumi M.J."/>
            <person name="Chan M.M."/>
            <person name="Tang C.C."/>
            <person name="Onodera C.S."/>
            <person name="Deng J.M."/>
            <person name="Akiyama K."/>
            <person name="Ansari Y."/>
            <person name="Arakawa T."/>
            <person name="Banh J."/>
            <person name="Banno F."/>
            <person name="Bowser L."/>
            <person name="Brooks S.Y."/>
            <person name="Carninci P."/>
            <person name="Chao Q."/>
            <person name="Choy N."/>
            <person name="Enju A."/>
            <person name="Goldsmith A.D."/>
            <person name="Gurjal M."/>
            <person name="Hansen N.F."/>
            <person name="Hayashizaki Y."/>
            <person name="Johnson-Hopson C."/>
            <person name="Hsuan V.W."/>
            <person name="Iida K."/>
            <person name="Karnes M."/>
            <person name="Khan S."/>
            <person name="Koesema E."/>
            <person name="Ishida J."/>
            <person name="Jiang P.X."/>
            <person name="Jones T."/>
            <person name="Kawai J."/>
            <person name="Kamiya A."/>
            <person name="Meyers C."/>
            <person name="Nakajima M."/>
            <person name="Narusaka M."/>
            <person name="Seki M."/>
            <person name="Sakurai T."/>
            <person name="Satou M."/>
            <person name="Tamse R."/>
            <person name="Vaysberg M."/>
            <person name="Wallender E.K."/>
            <person name="Wong C."/>
            <person name="Yamamura Y."/>
            <person name="Yuan S."/>
            <person name="Shinozaki K."/>
            <person name="Davis R.W."/>
            <person name="Theologis A."/>
            <person name="Ecker J.R."/>
        </authorList>
    </citation>
    <scope>NUCLEOTIDE SEQUENCE [LARGE SCALE MRNA]</scope>
    <source>
        <strain>cv. Columbia</strain>
    </source>
</reference>
<reference key="5">
    <citation type="journal article" date="2009" name="Plant Physiol. Biochem.">
        <title>Storage oil hydrolysis during early seedling growth.</title>
        <authorList>
            <person name="Quettier A.L."/>
            <person name="Eastmond P.J."/>
        </authorList>
    </citation>
    <scope>FUNCTION</scope>
    <scope>CATALYTIC ACTIVITY</scope>
    <scope>TISSUE SPECIFICITY</scope>
</reference>
<proteinExistence type="evidence at protein level"/>
<organism>
    <name type="scientific">Arabidopsis thaliana</name>
    <name type="common">Mouse-ear cress</name>
    <dbReference type="NCBI Taxonomy" id="3702"/>
    <lineage>
        <taxon>Eukaryota</taxon>
        <taxon>Viridiplantae</taxon>
        <taxon>Streptophyta</taxon>
        <taxon>Embryophyta</taxon>
        <taxon>Tracheophyta</taxon>
        <taxon>Spermatophyta</taxon>
        <taxon>Magnoliopsida</taxon>
        <taxon>eudicotyledons</taxon>
        <taxon>Gunneridae</taxon>
        <taxon>Pentapetalae</taxon>
        <taxon>rosids</taxon>
        <taxon>malvids</taxon>
        <taxon>Brassicales</taxon>
        <taxon>Brassicaceae</taxon>
        <taxon>Camelineae</taxon>
        <taxon>Arabidopsis</taxon>
    </lineage>
</organism>
<comment type="function">
    <text evidence="6">May be involved in the release of fatty acids from the oil body in germinating seedlings. Can hydrolyze triacylglycerols in vitro.</text>
</comment>
<comment type="catalytic activity">
    <reaction evidence="6">
        <text>a triacylglycerol + H2O = a diacylglycerol + a fatty acid + H(+)</text>
        <dbReference type="Rhea" id="RHEA:12044"/>
        <dbReference type="ChEBI" id="CHEBI:15377"/>
        <dbReference type="ChEBI" id="CHEBI:15378"/>
        <dbReference type="ChEBI" id="CHEBI:17855"/>
        <dbReference type="ChEBI" id="CHEBI:18035"/>
        <dbReference type="ChEBI" id="CHEBI:28868"/>
        <dbReference type="EC" id="3.1.1.3"/>
    </reaction>
</comment>
<comment type="subcellular location">
    <subcellularLocation>
        <location evidence="1">Lipid droplet</location>
    </subcellularLocation>
    <subcellularLocation>
        <location evidence="1">Membrane</location>
        <topology evidence="1">Multi-pass membrane protein</topology>
    </subcellularLocation>
    <text evidence="1">Associates with the oil body membrane.</text>
</comment>
<comment type="tissue specificity">
    <text evidence="6">Highly expressed in mature pollen.</text>
</comment>
<evidence type="ECO:0000250" key="1">
    <source>
        <dbReference type="UniProtKB" id="Q9LZA6"/>
    </source>
</evidence>
<evidence type="ECO:0000255" key="2"/>
<evidence type="ECO:0000255" key="3">
    <source>
        <dbReference type="PROSITE-ProRule" id="PRU00498"/>
    </source>
</evidence>
<evidence type="ECO:0000255" key="4">
    <source>
        <dbReference type="PROSITE-ProRule" id="PRU01161"/>
    </source>
</evidence>
<evidence type="ECO:0000256" key="5">
    <source>
        <dbReference type="SAM" id="MobiDB-lite"/>
    </source>
</evidence>
<evidence type="ECO:0000269" key="6">
    <source>
    </source>
</evidence>
<evidence type="ECO:0000303" key="7">
    <source>
    </source>
</evidence>
<evidence type="ECO:0000305" key="8"/>
<evidence type="ECO:0000312" key="9">
    <source>
        <dbReference type="Araport" id="AT3G57140"/>
    </source>
</evidence>
<evidence type="ECO:0000312" key="10">
    <source>
        <dbReference type="EMBL" id="CAB72184.1"/>
    </source>
</evidence>
<keyword id="KW-0325">Glycoprotein</keyword>
<keyword id="KW-0378">Hydrolase</keyword>
<keyword id="KW-0442">Lipid degradation</keyword>
<keyword id="KW-0551">Lipid droplet</keyword>
<keyword id="KW-0443">Lipid metabolism</keyword>
<keyword id="KW-0472">Membrane</keyword>
<keyword id="KW-1185">Reference proteome</keyword>
<keyword id="KW-0812">Transmembrane</keyword>
<keyword id="KW-1133">Transmembrane helix</keyword>
<gene>
    <name evidence="7" type="primary">SDP1L</name>
    <name evidence="9" type="ordered locus">At3g57140</name>
    <name evidence="10" type="ORF">F24I3.220</name>
</gene>
<protein>
    <recommendedName>
        <fullName evidence="8">Triacylglycerol lipase SDP1L</fullName>
        <ecNumber evidence="6">3.1.1.3</ecNumber>
    </recommendedName>
    <alternativeName>
        <fullName evidence="7">Protein SDP1-LIKE</fullName>
    </alternativeName>
</protein>
<sequence>MDISNEAGVDAFSIIGPTTIIGRTIAVRILFCNSVSIFRHKVFRILKFFLRGGRVLLSPFVSLLHPRNPQGILVMVTTMAFLLNRYTSLKAKAEMAYRRKFWRNMMRAALTYEEWSHAAKMLDKETPKVNETDLFDVELVSNKLDELKHRRHEGSLRDIIFCMRADLVRNLGNMCNPELHKGRLHVPRLIKEYIDEVSTQLRMVCDMDTEELSLEEKLSFMHETRHAYGRTALLLSGGASLGAFHLGVVKTLVEHKLLPRIIAGSSVGSVMCAVVGTRSWPELQSFFEGSWHALQFFDQMGGIFTTVKRVMTQGAVHEIRHLQWKLRNLTNNLTFQEAYDITGRILGITVCSLRKHEPPRCLNYLTSPHVVIWSAVTASCAFPGLFEAQELMAKDRTGEIVPYHPPFNLDPEEGSASVRRWRDGSLEMDLPMIQLKELFNVNHFIVSQANPHIAPFLRMKEFVRACGGRFAAKLAQLAEMEVKHRCNQVLELGLPLREVASLFAQEWEGDVTIVMPATFSQYLKIIQNPSNVEIQKAANQGRRCTWEKLAVIKANFGIELALDECVTVLNHMRRLKRSAERAAAFSAISSSPPSKHLLAGTNRFNASKRIPSWNCIARQNSSGSVDDDVLAEASRLYQHIVVGSGRNSNRTSNLSHTYDAGSECDSPEAEDWTRSGGPLMRTNSAQMFTDYVQNLDAVDPEQIRASENDSIVAASSSSHSITVTEGDYLQTGRTHNGFVLNLVRGENLRMNSEPEDSQNESEIPETPESVQLDSPEKDIIDGESSASEDGDAQANLIHDHE</sequence>